<protein>
    <recommendedName>
        <fullName evidence="1">Iron-sulfur cluster assembly protein CyaY</fullName>
    </recommendedName>
</protein>
<reference key="1">
    <citation type="journal article" date="2003" name="Nat. Biotechnol.">
        <title>The genome sequence of the entomopathogenic bacterium Photorhabdus luminescens.</title>
        <authorList>
            <person name="Duchaud E."/>
            <person name="Rusniok C."/>
            <person name="Frangeul L."/>
            <person name="Buchrieser C."/>
            <person name="Givaudan A."/>
            <person name="Taourit S."/>
            <person name="Bocs S."/>
            <person name="Boursaux-Eude C."/>
            <person name="Chandler M."/>
            <person name="Charles J.-F."/>
            <person name="Dassa E."/>
            <person name="Derose R."/>
            <person name="Derzelle S."/>
            <person name="Freyssinet G."/>
            <person name="Gaudriault S."/>
            <person name="Medigue C."/>
            <person name="Lanois A."/>
            <person name="Powell K."/>
            <person name="Siguier P."/>
            <person name="Vincent R."/>
            <person name="Wingate V."/>
            <person name="Zouine M."/>
            <person name="Glaser P."/>
            <person name="Boemare N."/>
            <person name="Danchin A."/>
            <person name="Kunst F."/>
        </authorList>
    </citation>
    <scope>NUCLEOTIDE SEQUENCE [LARGE SCALE GENOMIC DNA]</scope>
    <source>
        <strain>DSM 15139 / CIP 105565 / TT01</strain>
    </source>
</reference>
<proteinExistence type="inferred from homology"/>
<feature type="chain" id="PRO_0000193948" description="Iron-sulfur cluster assembly protein CyaY">
    <location>
        <begin position="1"/>
        <end position="106"/>
    </location>
</feature>
<accession>Q7MYN3</accession>
<sequence>MNDSEFHQLADQLILYIEGQLDNYDGNADIDCETNGGVMTLSFDNDSKIIINRQEPFHQIWLATKGGGYHFDYKEGQWICDRSGDNFLTMLAYAITEQSGEQFSFP</sequence>
<organism>
    <name type="scientific">Photorhabdus laumondii subsp. laumondii (strain DSM 15139 / CIP 105565 / TT01)</name>
    <name type="common">Photorhabdus luminescens subsp. laumondii</name>
    <dbReference type="NCBI Taxonomy" id="243265"/>
    <lineage>
        <taxon>Bacteria</taxon>
        <taxon>Pseudomonadati</taxon>
        <taxon>Pseudomonadota</taxon>
        <taxon>Gammaproteobacteria</taxon>
        <taxon>Enterobacterales</taxon>
        <taxon>Morganellaceae</taxon>
        <taxon>Photorhabdus</taxon>
    </lineage>
</organism>
<dbReference type="EMBL" id="BX571874">
    <property type="protein sequence ID" value="CAE17014.1"/>
    <property type="molecule type" value="Genomic_DNA"/>
</dbReference>
<dbReference type="RefSeq" id="WP_011148713.1">
    <property type="nucleotide sequence ID" value="NC_005126.1"/>
</dbReference>
<dbReference type="SMR" id="Q7MYN3"/>
<dbReference type="STRING" id="243265.plu4642"/>
<dbReference type="GeneID" id="48850855"/>
<dbReference type="KEGG" id="plu:plu4642"/>
<dbReference type="eggNOG" id="COG1965">
    <property type="taxonomic scope" value="Bacteria"/>
</dbReference>
<dbReference type="HOGENOM" id="CLU_080880_3_0_6"/>
<dbReference type="OrthoDB" id="285675at2"/>
<dbReference type="Proteomes" id="UP000002514">
    <property type="component" value="Chromosome"/>
</dbReference>
<dbReference type="GO" id="GO:0005829">
    <property type="term" value="C:cytosol"/>
    <property type="evidence" value="ECO:0007669"/>
    <property type="project" value="TreeGrafter"/>
</dbReference>
<dbReference type="GO" id="GO:0008199">
    <property type="term" value="F:ferric iron binding"/>
    <property type="evidence" value="ECO:0007669"/>
    <property type="project" value="InterPro"/>
</dbReference>
<dbReference type="GO" id="GO:0008198">
    <property type="term" value="F:ferrous iron binding"/>
    <property type="evidence" value="ECO:0007669"/>
    <property type="project" value="TreeGrafter"/>
</dbReference>
<dbReference type="GO" id="GO:0016226">
    <property type="term" value="P:iron-sulfur cluster assembly"/>
    <property type="evidence" value="ECO:0007669"/>
    <property type="project" value="UniProtKB-UniRule"/>
</dbReference>
<dbReference type="CDD" id="cd00503">
    <property type="entry name" value="Frataxin"/>
    <property type="match status" value="1"/>
</dbReference>
<dbReference type="Gene3D" id="3.30.920.10">
    <property type="entry name" value="Frataxin/CyaY"/>
    <property type="match status" value="1"/>
</dbReference>
<dbReference type="HAMAP" id="MF_00142">
    <property type="entry name" value="CyaY"/>
    <property type="match status" value="1"/>
</dbReference>
<dbReference type="InterPro" id="IPR047584">
    <property type="entry name" value="CyaY"/>
</dbReference>
<dbReference type="InterPro" id="IPR002908">
    <property type="entry name" value="Frataxin/CyaY"/>
</dbReference>
<dbReference type="InterPro" id="IPR036524">
    <property type="entry name" value="Frataxin/CyaY_sf"/>
</dbReference>
<dbReference type="InterPro" id="IPR020895">
    <property type="entry name" value="Frataxin_CS"/>
</dbReference>
<dbReference type="NCBIfam" id="TIGR03421">
    <property type="entry name" value="FeS_CyaY"/>
    <property type="match status" value="1"/>
</dbReference>
<dbReference type="PANTHER" id="PTHR16821">
    <property type="entry name" value="FRATAXIN"/>
    <property type="match status" value="1"/>
</dbReference>
<dbReference type="PANTHER" id="PTHR16821:SF2">
    <property type="entry name" value="FRATAXIN, MITOCHONDRIAL"/>
    <property type="match status" value="1"/>
</dbReference>
<dbReference type="Pfam" id="PF01491">
    <property type="entry name" value="Frataxin_Cyay"/>
    <property type="match status" value="1"/>
</dbReference>
<dbReference type="SMART" id="SM01219">
    <property type="entry name" value="Frataxin_Cyay"/>
    <property type="match status" value="1"/>
</dbReference>
<dbReference type="SUPFAM" id="SSF55387">
    <property type="entry name" value="Frataxin/Nqo15-like"/>
    <property type="match status" value="1"/>
</dbReference>
<dbReference type="PROSITE" id="PS01344">
    <property type="entry name" value="FRATAXIN_1"/>
    <property type="match status" value="1"/>
</dbReference>
<dbReference type="PROSITE" id="PS50810">
    <property type="entry name" value="FRATAXIN_2"/>
    <property type="match status" value="1"/>
</dbReference>
<gene>
    <name evidence="1" type="primary">cyaY</name>
    <name type="ordered locus">plu4642</name>
</gene>
<name>CYAY_PHOLL</name>
<evidence type="ECO:0000255" key="1">
    <source>
        <dbReference type="HAMAP-Rule" id="MF_00142"/>
    </source>
</evidence>
<comment type="function">
    <text evidence="1">Involved in iron-sulfur (Fe-S) cluster assembly. May act as a regulator of Fe-S biogenesis.</text>
</comment>
<comment type="similarity">
    <text evidence="1">Belongs to the frataxin family.</text>
</comment>
<keyword id="KW-0408">Iron</keyword>
<keyword id="KW-0479">Metal-binding</keyword>
<keyword id="KW-1185">Reference proteome</keyword>